<name>RECF_STRP6</name>
<reference key="1">
    <citation type="journal article" date="1995" name="Gene">
        <title>Molecular cloning of the gene encoding RecF, a DNA repair enzyme, from Streptococcus pyogenes.</title>
        <authorList>
            <person name="Deangelis P.L."/>
            <person name="Yang N."/>
            <person name="Weigel P.H."/>
        </authorList>
    </citation>
    <scope>NUCLEOTIDE SEQUENCE [GENOMIC DNA]</scope>
    <source>
        <strain>ATCC 21547 / S43 / Serotype M6</strain>
    </source>
</reference>
<reference key="2">
    <citation type="journal article" date="2004" name="J. Infect. Dis.">
        <title>Progress toward characterization of the group A Streptococcus metagenome: complete genome sequence of a macrolide-resistant serotype M6 strain.</title>
        <authorList>
            <person name="Banks D.J."/>
            <person name="Porcella S.F."/>
            <person name="Barbian K.D."/>
            <person name="Beres S.B."/>
            <person name="Philips L.E."/>
            <person name="Voyich J.M."/>
            <person name="DeLeo F.R."/>
            <person name="Martin J.M."/>
            <person name="Somerville G.A."/>
            <person name="Musser J.M."/>
        </authorList>
    </citation>
    <scope>NUCLEOTIDE SEQUENCE [LARGE SCALE GENOMIC DNA]</scope>
    <source>
        <strain>ATCC BAA-946 / MGAS10394</strain>
    </source>
</reference>
<proteinExistence type="inferred from homology"/>
<evidence type="ECO:0000255" key="1">
    <source>
        <dbReference type="HAMAP-Rule" id="MF_00365"/>
    </source>
</evidence>
<organism>
    <name type="scientific">Streptococcus pyogenes serotype M6 (strain ATCC BAA-946 / MGAS10394)</name>
    <dbReference type="NCBI Taxonomy" id="286636"/>
    <lineage>
        <taxon>Bacteria</taxon>
        <taxon>Bacillati</taxon>
        <taxon>Bacillota</taxon>
        <taxon>Bacilli</taxon>
        <taxon>Lactobacillales</taxon>
        <taxon>Streptococcaceae</taxon>
        <taxon>Streptococcus</taxon>
    </lineage>
</organism>
<dbReference type="EMBL" id="U07342">
    <property type="protein sequence ID" value="AAA85783.1"/>
    <property type="molecule type" value="Genomic_DNA"/>
</dbReference>
<dbReference type="EMBL" id="CP000003">
    <property type="protein sequence ID" value="AAT88008.1"/>
    <property type="molecule type" value="Genomic_DNA"/>
</dbReference>
<dbReference type="PIR" id="JC4077">
    <property type="entry name" value="JC4077"/>
</dbReference>
<dbReference type="RefSeq" id="WP_011185108.1">
    <property type="nucleotide sequence ID" value="NC_006086.1"/>
</dbReference>
<dbReference type="SMR" id="Q5X9A5"/>
<dbReference type="KEGG" id="spa:M6_Spy1873"/>
<dbReference type="HOGENOM" id="CLU_040267_0_1_9"/>
<dbReference type="Proteomes" id="UP000001167">
    <property type="component" value="Chromosome"/>
</dbReference>
<dbReference type="GO" id="GO:0005737">
    <property type="term" value="C:cytoplasm"/>
    <property type="evidence" value="ECO:0007669"/>
    <property type="project" value="UniProtKB-SubCell"/>
</dbReference>
<dbReference type="GO" id="GO:0005524">
    <property type="term" value="F:ATP binding"/>
    <property type="evidence" value="ECO:0007669"/>
    <property type="project" value="UniProtKB-UniRule"/>
</dbReference>
<dbReference type="GO" id="GO:0003697">
    <property type="term" value="F:single-stranded DNA binding"/>
    <property type="evidence" value="ECO:0007669"/>
    <property type="project" value="UniProtKB-UniRule"/>
</dbReference>
<dbReference type="GO" id="GO:0006260">
    <property type="term" value="P:DNA replication"/>
    <property type="evidence" value="ECO:0007669"/>
    <property type="project" value="UniProtKB-UniRule"/>
</dbReference>
<dbReference type="GO" id="GO:0000731">
    <property type="term" value="P:DNA synthesis involved in DNA repair"/>
    <property type="evidence" value="ECO:0007669"/>
    <property type="project" value="TreeGrafter"/>
</dbReference>
<dbReference type="GO" id="GO:0006302">
    <property type="term" value="P:double-strand break repair"/>
    <property type="evidence" value="ECO:0007669"/>
    <property type="project" value="TreeGrafter"/>
</dbReference>
<dbReference type="GO" id="GO:0009432">
    <property type="term" value="P:SOS response"/>
    <property type="evidence" value="ECO:0007669"/>
    <property type="project" value="UniProtKB-UniRule"/>
</dbReference>
<dbReference type="CDD" id="cd03242">
    <property type="entry name" value="ABC_RecF"/>
    <property type="match status" value="1"/>
</dbReference>
<dbReference type="Gene3D" id="3.40.50.300">
    <property type="entry name" value="P-loop containing nucleotide triphosphate hydrolases"/>
    <property type="match status" value="1"/>
</dbReference>
<dbReference type="Gene3D" id="1.20.1050.90">
    <property type="entry name" value="RecF/RecN/SMC, N-terminal domain"/>
    <property type="match status" value="1"/>
</dbReference>
<dbReference type="HAMAP" id="MF_00365">
    <property type="entry name" value="RecF"/>
    <property type="match status" value="1"/>
</dbReference>
<dbReference type="InterPro" id="IPR001238">
    <property type="entry name" value="DNA-binding_RecF"/>
</dbReference>
<dbReference type="InterPro" id="IPR018078">
    <property type="entry name" value="DNA-binding_RecF_CS"/>
</dbReference>
<dbReference type="InterPro" id="IPR027417">
    <property type="entry name" value="P-loop_NTPase"/>
</dbReference>
<dbReference type="InterPro" id="IPR003395">
    <property type="entry name" value="RecF/RecN/SMC_N"/>
</dbReference>
<dbReference type="InterPro" id="IPR042174">
    <property type="entry name" value="RecF_2"/>
</dbReference>
<dbReference type="NCBIfam" id="TIGR00611">
    <property type="entry name" value="recf"/>
    <property type="match status" value="1"/>
</dbReference>
<dbReference type="PANTHER" id="PTHR32182">
    <property type="entry name" value="DNA REPLICATION AND REPAIR PROTEIN RECF"/>
    <property type="match status" value="1"/>
</dbReference>
<dbReference type="PANTHER" id="PTHR32182:SF0">
    <property type="entry name" value="DNA REPLICATION AND REPAIR PROTEIN RECF"/>
    <property type="match status" value="1"/>
</dbReference>
<dbReference type="Pfam" id="PF02463">
    <property type="entry name" value="SMC_N"/>
    <property type="match status" value="1"/>
</dbReference>
<dbReference type="SUPFAM" id="SSF52540">
    <property type="entry name" value="P-loop containing nucleoside triphosphate hydrolases"/>
    <property type="match status" value="1"/>
</dbReference>
<dbReference type="PROSITE" id="PS00617">
    <property type="entry name" value="RECF_1"/>
    <property type="match status" value="1"/>
</dbReference>
<dbReference type="PROSITE" id="PS00618">
    <property type="entry name" value="RECF_2"/>
    <property type="match status" value="1"/>
</dbReference>
<feature type="chain" id="PRO_0000196476" description="DNA replication and repair protein RecF">
    <location>
        <begin position="1"/>
        <end position="368"/>
    </location>
</feature>
<feature type="binding site" evidence="1">
    <location>
        <begin position="30"/>
        <end position="37"/>
    </location>
    <ligand>
        <name>ATP</name>
        <dbReference type="ChEBI" id="CHEBI:30616"/>
    </ligand>
</feature>
<comment type="function">
    <text evidence="1">The RecF protein is involved in DNA metabolism; it is required for DNA replication and normal SOS inducibility. RecF binds preferentially to single-stranded, linear DNA. It also seems to bind ATP.</text>
</comment>
<comment type="subcellular location">
    <subcellularLocation>
        <location evidence="1">Cytoplasm</location>
    </subcellularLocation>
</comment>
<comment type="similarity">
    <text evidence="1">Belongs to the RecF family.</text>
</comment>
<protein>
    <recommendedName>
        <fullName evidence="1">DNA replication and repair protein RecF</fullName>
    </recommendedName>
</protein>
<gene>
    <name evidence="1" type="primary">recF</name>
    <name type="ordered locus">M6_Spy1873</name>
</gene>
<sequence>MWIKELELKHYRNYDHLLASFSSGLNVFIGNNAQGKTNFLEAIYFLSLTRSHRTRADKELIHFDHSTVSLTGKIQRISGTVDLEINLSDKGRVTKINALKQAKLSDYIGTMMVVLFAPEDLQLVKGAPSLRRKFIDIDLGQIKPVYLSELSHYNHVLKQRNSYLKSAQQIDAAFLAVLDEQLAGYGARVMEHRIDFINALEKEANTHHQAISNGLESLSLSYQSSVVFDKKTNIYQQFLHQLEKNHQKDFFRKNTSVGPHRDDLAFYINGMNANFASQGQHRSLILSLKMAEVSLMKALTGDNPILLLDDVMSELDNTRQTKLLETVIKENVQTFITTTSLDHLSQLPEGIRIFHVTKGTVQIDSDIH</sequence>
<accession>Q5X9A5</accession>
<accession>P49999</accession>
<keyword id="KW-0067">ATP-binding</keyword>
<keyword id="KW-0963">Cytoplasm</keyword>
<keyword id="KW-0227">DNA damage</keyword>
<keyword id="KW-0234">DNA repair</keyword>
<keyword id="KW-0235">DNA replication</keyword>
<keyword id="KW-0238">DNA-binding</keyword>
<keyword id="KW-0547">Nucleotide-binding</keyword>
<keyword id="KW-0742">SOS response</keyword>